<proteinExistence type="inferred from homology"/>
<organism>
    <name type="scientific">Dictyostelium discoideum</name>
    <name type="common">Social amoeba</name>
    <dbReference type="NCBI Taxonomy" id="44689"/>
    <lineage>
        <taxon>Eukaryota</taxon>
        <taxon>Amoebozoa</taxon>
        <taxon>Evosea</taxon>
        <taxon>Eumycetozoa</taxon>
        <taxon>Dictyostelia</taxon>
        <taxon>Dictyosteliales</taxon>
        <taxon>Dictyosteliaceae</taxon>
        <taxon>Dictyostelium</taxon>
    </lineage>
</organism>
<reference key="1">
    <citation type="journal article" date="2005" name="Nature">
        <title>The genome of the social amoeba Dictyostelium discoideum.</title>
        <authorList>
            <person name="Eichinger L."/>
            <person name="Pachebat J.A."/>
            <person name="Gloeckner G."/>
            <person name="Rajandream M.A."/>
            <person name="Sucgang R."/>
            <person name="Berriman M."/>
            <person name="Song J."/>
            <person name="Olsen R."/>
            <person name="Szafranski K."/>
            <person name="Xu Q."/>
            <person name="Tunggal B."/>
            <person name="Kummerfeld S."/>
            <person name="Madera M."/>
            <person name="Konfortov B.A."/>
            <person name="Rivero F."/>
            <person name="Bankier A.T."/>
            <person name="Lehmann R."/>
            <person name="Hamlin N."/>
            <person name="Davies R."/>
            <person name="Gaudet P."/>
            <person name="Fey P."/>
            <person name="Pilcher K."/>
            <person name="Chen G."/>
            <person name="Saunders D."/>
            <person name="Sodergren E.J."/>
            <person name="Davis P."/>
            <person name="Kerhornou A."/>
            <person name="Nie X."/>
            <person name="Hall N."/>
            <person name="Anjard C."/>
            <person name="Hemphill L."/>
            <person name="Bason N."/>
            <person name="Farbrother P."/>
            <person name="Desany B."/>
            <person name="Just E."/>
            <person name="Morio T."/>
            <person name="Rost R."/>
            <person name="Churcher C.M."/>
            <person name="Cooper J."/>
            <person name="Haydock S."/>
            <person name="van Driessche N."/>
            <person name="Cronin A."/>
            <person name="Goodhead I."/>
            <person name="Muzny D.M."/>
            <person name="Mourier T."/>
            <person name="Pain A."/>
            <person name="Lu M."/>
            <person name="Harper D."/>
            <person name="Lindsay R."/>
            <person name="Hauser H."/>
            <person name="James K.D."/>
            <person name="Quiles M."/>
            <person name="Madan Babu M."/>
            <person name="Saito T."/>
            <person name="Buchrieser C."/>
            <person name="Wardroper A."/>
            <person name="Felder M."/>
            <person name="Thangavelu M."/>
            <person name="Johnson D."/>
            <person name="Knights A."/>
            <person name="Loulseged H."/>
            <person name="Mungall K.L."/>
            <person name="Oliver K."/>
            <person name="Price C."/>
            <person name="Quail M.A."/>
            <person name="Urushihara H."/>
            <person name="Hernandez J."/>
            <person name="Rabbinowitsch E."/>
            <person name="Steffen D."/>
            <person name="Sanders M."/>
            <person name="Ma J."/>
            <person name="Kohara Y."/>
            <person name="Sharp S."/>
            <person name="Simmonds M.N."/>
            <person name="Spiegler S."/>
            <person name="Tivey A."/>
            <person name="Sugano S."/>
            <person name="White B."/>
            <person name="Walker D."/>
            <person name="Woodward J.R."/>
            <person name="Winckler T."/>
            <person name="Tanaka Y."/>
            <person name="Shaulsky G."/>
            <person name="Schleicher M."/>
            <person name="Weinstock G.M."/>
            <person name="Rosenthal A."/>
            <person name="Cox E.C."/>
            <person name="Chisholm R.L."/>
            <person name="Gibbs R.A."/>
            <person name="Loomis W.F."/>
            <person name="Platzer M."/>
            <person name="Kay R.R."/>
            <person name="Williams J.G."/>
            <person name="Dear P.H."/>
            <person name="Noegel A.A."/>
            <person name="Barrell B.G."/>
            <person name="Kuspa A."/>
        </authorList>
    </citation>
    <scope>NUCLEOTIDE SEQUENCE [LARGE SCALE GENOMIC DNA]</scope>
    <source>
        <strain>AX4</strain>
    </source>
</reference>
<evidence type="ECO:0000250" key="1"/>
<evidence type="ECO:0000250" key="2">
    <source>
        <dbReference type="UniProtKB" id="Q969M3"/>
    </source>
</evidence>
<evidence type="ECO:0000250" key="3">
    <source>
        <dbReference type="UniProtKB" id="Q9EQQ2"/>
    </source>
</evidence>
<evidence type="ECO:0000255" key="4"/>
<evidence type="ECO:0000305" key="5"/>
<comment type="function">
    <text evidence="1">Plays a role in transport between endoplasmic reticulum and Golgi.</text>
</comment>
<comment type="subcellular location">
    <subcellularLocation>
        <location evidence="3">Endoplasmic reticulum membrane</location>
        <topology>Multi-pass membrane protein</topology>
    </subcellularLocation>
    <subcellularLocation>
        <location evidence="2">Golgi apparatus</location>
        <location evidence="2">cis-Golgi network membrane</location>
        <topology evidence="1">Multi-pass membrane protein</topology>
    </subcellularLocation>
</comment>
<comment type="similarity">
    <text evidence="5">Belongs to the YIP1 family.</text>
</comment>
<protein>
    <recommendedName>
        <fullName>Protein YIPF5 homolog</fullName>
    </recommendedName>
</protein>
<gene>
    <name type="primary">yipf5</name>
    <name type="ORF">DDB_G0283541</name>
</gene>
<feature type="chain" id="PRO_0000330339" description="Protein YIPF5 homolog">
    <location>
        <begin position="1"/>
        <end position="212"/>
    </location>
</feature>
<feature type="topological domain" description="Cytoplasmic" evidence="2">
    <location>
        <begin position="1"/>
        <end position="79"/>
    </location>
</feature>
<feature type="transmembrane region" description="Helical" evidence="4">
    <location>
        <begin position="80"/>
        <end position="100"/>
    </location>
</feature>
<feature type="topological domain" description="Lumenal" evidence="5">
    <location>
        <position position="101"/>
    </location>
</feature>
<feature type="transmembrane region" description="Helical" evidence="4">
    <location>
        <begin position="102"/>
        <end position="122"/>
    </location>
</feature>
<feature type="topological domain" description="Cytoplasmic" evidence="5">
    <location>
        <begin position="123"/>
        <end position="128"/>
    </location>
</feature>
<feature type="transmembrane region" description="Helical" evidence="4">
    <location>
        <begin position="129"/>
        <end position="149"/>
    </location>
</feature>
<feature type="topological domain" description="Lumenal" evidence="5">
    <location>
        <begin position="150"/>
        <end position="163"/>
    </location>
</feature>
<feature type="transmembrane region" description="Helical" evidence="4">
    <location>
        <begin position="164"/>
        <end position="186"/>
    </location>
</feature>
<feature type="topological domain" description="Cytoplasmic" evidence="5">
    <location>
        <begin position="187"/>
        <end position="191"/>
    </location>
</feature>
<feature type="transmembrane region" description="Helical" evidence="4">
    <location>
        <begin position="192"/>
        <end position="212"/>
    </location>
</feature>
<keyword id="KW-0256">Endoplasmic reticulum</keyword>
<keyword id="KW-0931">ER-Golgi transport</keyword>
<keyword id="KW-0333">Golgi apparatus</keyword>
<keyword id="KW-0472">Membrane</keyword>
<keyword id="KW-0653">Protein transport</keyword>
<keyword id="KW-1185">Reference proteome</keyword>
<keyword id="KW-0812">Transmembrane</keyword>
<keyword id="KW-1133">Transmembrane helix</keyword>
<keyword id="KW-0813">Transport</keyword>
<dbReference type="EMBL" id="AAFI02000055">
    <property type="protein sequence ID" value="EAL65648.1"/>
    <property type="molecule type" value="Genomic_DNA"/>
</dbReference>
<dbReference type="RefSeq" id="XP_639001.1">
    <property type="nucleotide sequence ID" value="XM_633909.1"/>
</dbReference>
<dbReference type="FunCoup" id="Q54QY3">
    <property type="interactions" value="1028"/>
</dbReference>
<dbReference type="STRING" id="44689.Q54QY3"/>
<dbReference type="PaxDb" id="44689-DDB0238115"/>
<dbReference type="EnsemblProtists" id="EAL65648">
    <property type="protein sequence ID" value="EAL65648"/>
    <property type="gene ID" value="DDB_G0283541"/>
</dbReference>
<dbReference type="GeneID" id="8624131"/>
<dbReference type="KEGG" id="ddi:DDB_G0283541"/>
<dbReference type="dictyBase" id="DDB_G0283541">
    <property type="gene designation" value="yipf5"/>
</dbReference>
<dbReference type="VEuPathDB" id="AmoebaDB:DDB_G0283541"/>
<dbReference type="eggNOG" id="KOG3103">
    <property type="taxonomic scope" value="Eukaryota"/>
</dbReference>
<dbReference type="HOGENOM" id="CLU_074741_4_2_1"/>
<dbReference type="InParanoid" id="Q54QY3"/>
<dbReference type="OMA" id="HIRAKSM"/>
<dbReference type="PhylomeDB" id="Q54QY3"/>
<dbReference type="PRO" id="PR:Q54QY3"/>
<dbReference type="Proteomes" id="UP000002195">
    <property type="component" value="Chromosome 4"/>
</dbReference>
<dbReference type="GO" id="GO:0005789">
    <property type="term" value="C:endoplasmic reticulum membrane"/>
    <property type="evidence" value="ECO:0007669"/>
    <property type="project" value="UniProtKB-SubCell"/>
</dbReference>
<dbReference type="GO" id="GO:0005802">
    <property type="term" value="C:trans-Golgi network"/>
    <property type="evidence" value="ECO:0000318"/>
    <property type="project" value="GO_Central"/>
</dbReference>
<dbReference type="GO" id="GO:0006888">
    <property type="term" value="P:endoplasmic reticulum to Golgi vesicle-mediated transport"/>
    <property type="evidence" value="ECO:0000318"/>
    <property type="project" value="GO_Central"/>
</dbReference>
<dbReference type="GO" id="GO:0015031">
    <property type="term" value="P:protein transport"/>
    <property type="evidence" value="ECO:0007669"/>
    <property type="project" value="UniProtKB-KW"/>
</dbReference>
<dbReference type="GO" id="GO:0048280">
    <property type="term" value="P:vesicle fusion with Golgi apparatus"/>
    <property type="evidence" value="ECO:0000318"/>
    <property type="project" value="GO_Central"/>
</dbReference>
<dbReference type="InterPro" id="IPR045231">
    <property type="entry name" value="Yip1/4-like"/>
</dbReference>
<dbReference type="InterPro" id="IPR006977">
    <property type="entry name" value="Yip1_dom"/>
</dbReference>
<dbReference type="PANTHER" id="PTHR21236">
    <property type="entry name" value="GOLGI MEMBRANE PROTEIN YIP1"/>
    <property type="match status" value="1"/>
</dbReference>
<dbReference type="PANTHER" id="PTHR21236:SF2">
    <property type="entry name" value="PROTEIN YIPF"/>
    <property type="match status" value="1"/>
</dbReference>
<dbReference type="Pfam" id="PF04893">
    <property type="entry name" value="Yip1"/>
    <property type="match status" value="1"/>
</dbReference>
<sequence length="212" mass="23227">MNNNNSFNFIDSQYSTPQGAYYDNTGRMGGGGGMGGPTDSFDNELPLLEELGINFDHIRSKTLSVLNPLKKIDSHIMDDTDLGGPILFGLLLGFSLLMSGKIQFGYIYGLGLIGCVSMYIVLNLMSEKGIDIYRVISVLGYCLLPMIFLSFTSLIININGMVGYILIGFAIVWSTYSASKMFVKVLSMIDQRILVAYPVGLLYTGFALITAF</sequence>
<accession>Q54QY3</accession>
<name>YIPF5_DICDI</name>